<comment type="function">
    <text evidence="1">Component of the THO subcomplex of the TREX complex which is thought to couple mRNA transcription, processing and nuclear export, and which specifically associates with spliced mRNA and not with unspliced pre-mRNA. Required for efficient export of polyadenylated RNA. Plays a key structural role in the oligomerization of the THO-DDX39B complex. TREX is recruited to spliced mRNAs by a transcription-independent mechanism, binds to mRNA upstream of the exon-junction complex (EJC) and is recruited in a splicing- and cap-dependent manner to a region near the 5' end of the mRNA where it functions in mRNA export to the cytoplasm via the TAP/NXF1 pathway.</text>
</comment>
<comment type="subunit">
    <text evidence="1">Component of the THO subcomplex, which is composed of thoc1, thoc2, thoc3, thoc5, thoc6 and thoc7. Component of the transcription/export (TREX) complex at least composed of alyref/thoc4, ddx39b, sarnp/cip29, chtop and the THO subcomplex.</text>
</comment>
<comment type="subcellular location">
    <subcellularLocation>
        <location evidence="1">Cytoplasm</location>
    </subcellularLocation>
    <subcellularLocation>
        <location evidence="1">Nucleus</location>
    </subcellularLocation>
    <subcellularLocation>
        <location evidence="1">Nucleus speckle</location>
    </subcellularLocation>
</comment>
<comment type="similarity">
    <text evidence="4">Belongs to the THOC7 family.</text>
</comment>
<organism>
    <name type="scientific">Danio rerio</name>
    <name type="common">Zebrafish</name>
    <name type="synonym">Brachydanio rerio</name>
    <dbReference type="NCBI Taxonomy" id="7955"/>
    <lineage>
        <taxon>Eukaryota</taxon>
        <taxon>Metazoa</taxon>
        <taxon>Chordata</taxon>
        <taxon>Craniata</taxon>
        <taxon>Vertebrata</taxon>
        <taxon>Euteleostomi</taxon>
        <taxon>Actinopterygii</taxon>
        <taxon>Neopterygii</taxon>
        <taxon>Teleostei</taxon>
        <taxon>Ostariophysi</taxon>
        <taxon>Cypriniformes</taxon>
        <taxon>Danionidae</taxon>
        <taxon>Danioninae</taxon>
        <taxon>Danio</taxon>
    </lineage>
</organism>
<keyword id="KW-0175">Coiled coil</keyword>
<keyword id="KW-0963">Cytoplasm</keyword>
<keyword id="KW-0507">mRNA processing</keyword>
<keyword id="KW-0508">mRNA splicing</keyword>
<keyword id="KW-0509">mRNA transport</keyword>
<keyword id="KW-0539">Nucleus</keyword>
<keyword id="KW-1185">Reference proteome</keyword>
<keyword id="KW-0694">RNA-binding</keyword>
<keyword id="KW-0813">Transport</keyword>
<protein>
    <recommendedName>
        <fullName>THO complex subunit 7 homolog</fullName>
    </recommendedName>
</protein>
<gene>
    <name type="primary">thoc7</name>
    <name type="ORF">zgc:92711</name>
</gene>
<dbReference type="EMBL" id="BC076191">
    <property type="protein sequence ID" value="AAH76191.1"/>
    <property type="molecule type" value="mRNA"/>
</dbReference>
<dbReference type="RefSeq" id="NP_001003429.1">
    <property type="nucleotide sequence ID" value="NM_001003429.2"/>
</dbReference>
<dbReference type="SMR" id="Q6DGZ3"/>
<dbReference type="FunCoup" id="Q6DGZ3">
    <property type="interactions" value="1597"/>
</dbReference>
<dbReference type="STRING" id="7955.ENSDARP00000022217"/>
<dbReference type="PaxDb" id="7955-ENSDARP00000022217"/>
<dbReference type="Ensembl" id="ENSDART00000005639">
    <property type="protein sequence ID" value="ENSDARP00000022217"/>
    <property type="gene ID" value="ENSDARG00000015394"/>
</dbReference>
<dbReference type="GeneID" id="445035"/>
<dbReference type="KEGG" id="dre:445035"/>
<dbReference type="AGR" id="ZFIN:ZDB-GENE-040801-17"/>
<dbReference type="CTD" id="80145"/>
<dbReference type="ZFIN" id="ZDB-GENE-040801-17">
    <property type="gene designation" value="thoc7"/>
</dbReference>
<dbReference type="eggNOG" id="KOG3215">
    <property type="taxonomic scope" value="Eukaryota"/>
</dbReference>
<dbReference type="HOGENOM" id="CLU_087727_0_0_1"/>
<dbReference type="InParanoid" id="Q6DGZ3"/>
<dbReference type="OMA" id="WANSKND"/>
<dbReference type="OrthoDB" id="205166at2759"/>
<dbReference type="PhylomeDB" id="Q6DGZ3"/>
<dbReference type="TreeFam" id="TF319308"/>
<dbReference type="PRO" id="PR:Q6DGZ3"/>
<dbReference type="Proteomes" id="UP000000437">
    <property type="component" value="Chromosome 11"/>
</dbReference>
<dbReference type="Bgee" id="ENSDARG00000015394">
    <property type="expression patterns" value="Expressed in early embryo and 29 other cell types or tissues"/>
</dbReference>
<dbReference type="GO" id="GO:0005737">
    <property type="term" value="C:cytoplasm"/>
    <property type="evidence" value="ECO:0000250"/>
    <property type="project" value="UniProtKB"/>
</dbReference>
<dbReference type="GO" id="GO:0016607">
    <property type="term" value="C:nuclear speck"/>
    <property type="evidence" value="ECO:0007669"/>
    <property type="project" value="UniProtKB-SubCell"/>
</dbReference>
<dbReference type="GO" id="GO:0005634">
    <property type="term" value="C:nucleus"/>
    <property type="evidence" value="ECO:0000250"/>
    <property type="project" value="UniProtKB"/>
</dbReference>
<dbReference type="GO" id="GO:0000445">
    <property type="term" value="C:THO complex part of transcription export complex"/>
    <property type="evidence" value="ECO:0000318"/>
    <property type="project" value="GO_Central"/>
</dbReference>
<dbReference type="GO" id="GO:0003723">
    <property type="term" value="F:RNA binding"/>
    <property type="evidence" value="ECO:0007669"/>
    <property type="project" value="UniProtKB-KW"/>
</dbReference>
<dbReference type="GO" id="GO:0006406">
    <property type="term" value="P:mRNA export from nucleus"/>
    <property type="evidence" value="ECO:0000318"/>
    <property type="project" value="GO_Central"/>
</dbReference>
<dbReference type="GO" id="GO:0006397">
    <property type="term" value="P:mRNA processing"/>
    <property type="evidence" value="ECO:0007669"/>
    <property type="project" value="UniProtKB-KW"/>
</dbReference>
<dbReference type="GO" id="GO:0008380">
    <property type="term" value="P:RNA splicing"/>
    <property type="evidence" value="ECO:0007669"/>
    <property type="project" value="UniProtKB-KW"/>
</dbReference>
<dbReference type="InterPro" id="IPR008501">
    <property type="entry name" value="THOC7/Mft1"/>
</dbReference>
<dbReference type="PANTHER" id="PTHR23405">
    <property type="entry name" value="MAINTENANCE OF KILLER 16 MAK16 PROTEIN-RELATED"/>
    <property type="match status" value="1"/>
</dbReference>
<dbReference type="PANTHER" id="PTHR23405:SF5">
    <property type="entry name" value="THO COMPLEX SUBUNIT 7 HOMOLOG"/>
    <property type="match status" value="1"/>
</dbReference>
<dbReference type="Pfam" id="PF05615">
    <property type="entry name" value="THOC7"/>
    <property type="match status" value="1"/>
</dbReference>
<reference key="1">
    <citation type="submission" date="2004-07" db="EMBL/GenBank/DDBJ databases">
        <authorList>
            <consortium name="NIH - Zebrafish Gene Collection (ZGC) project"/>
        </authorList>
    </citation>
    <scope>NUCLEOTIDE SEQUENCE [LARGE SCALE MRNA]</scope>
    <source>
        <tissue>Eye</tissue>
    </source>
</reference>
<proteinExistence type="evidence at transcript level"/>
<accession>Q6DGZ3</accession>
<evidence type="ECO:0000250" key="1">
    <source>
        <dbReference type="UniProtKB" id="Q6I9Y2"/>
    </source>
</evidence>
<evidence type="ECO:0000255" key="2"/>
<evidence type="ECO:0000256" key="3">
    <source>
        <dbReference type="SAM" id="MobiDB-lite"/>
    </source>
</evidence>
<evidence type="ECO:0000305" key="4"/>
<feature type="chain" id="PRO_0000310756" description="THO complex subunit 7 homolog">
    <location>
        <begin position="1"/>
        <end position="202"/>
    </location>
</feature>
<feature type="region of interest" description="Disordered" evidence="3">
    <location>
        <begin position="181"/>
        <end position="202"/>
    </location>
</feature>
<feature type="coiled-coil region" evidence="2">
    <location>
        <begin position="86"/>
        <end position="167"/>
    </location>
</feature>
<sequence>MGSITDDEVIRKRLLIDGDGAGDDRRINVLMKSFTKWCHSSFSPEEGMSQYQRMMMSLAQCEFSMGKTLLVYNMNLKEMENYEGIYTDIEKSIASAHEKIAECKKEIQRAKRIRKNRQEYDALARVIKQHPDRHETLKQLEALDKDLQQLSHIKENVEDKLELRKKQFHVLLTTIQELQQTLENDEKMESDDTQDSPMENGD</sequence>
<name>THOC7_DANRE</name>